<feature type="chain" id="PRO_0000199887" description="Probable hexose phosphate transport protein">
    <location>
        <begin position="1"/>
        <end position="456"/>
    </location>
</feature>
<feature type="transmembrane region" description="Helical" evidence="2">
    <location>
        <begin position="34"/>
        <end position="54"/>
    </location>
</feature>
<feature type="transmembrane region" description="Helical" evidence="2">
    <location>
        <begin position="70"/>
        <end position="90"/>
    </location>
</feature>
<feature type="transmembrane region" description="Helical" evidence="2">
    <location>
        <begin position="113"/>
        <end position="133"/>
    </location>
</feature>
<feature type="transmembrane region" description="Helical" evidence="2">
    <location>
        <begin position="161"/>
        <end position="181"/>
    </location>
</feature>
<feature type="transmembrane region" description="Helical" evidence="2">
    <location>
        <begin position="185"/>
        <end position="205"/>
    </location>
</feature>
<feature type="transmembrane region" description="Helical" evidence="2">
    <location>
        <begin position="257"/>
        <end position="277"/>
    </location>
</feature>
<feature type="transmembrane region" description="Helical" evidence="2">
    <location>
        <begin position="302"/>
        <end position="322"/>
    </location>
</feature>
<feature type="transmembrane region" description="Helical" evidence="2">
    <location>
        <begin position="331"/>
        <end position="351"/>
    </location>
</feature>
<feature type="transmembrane region" description="Helical" evidence="2">
    <location>
        <begin position="362"/>
        <end position="382"/>
    </location>
</feature>
<feature type="transmembrane region" description="Helical" evidence="2">
    <location>
        <begin position="394"/>
        <end position="414"/>
    </location>
</feature>
<feature type="transmembrane region" description="Helical" evidence="2">
    <location>
        <begin position="421"/>
        <end position="441"/>
    </location>
</feature>
<protein>
    <recommendedName>
        <fullName>Probable hexose phosphate transport protein</fullName>
    </recommendedName>
</protein>
<dbReference type="EMBL" id="AE002160">
    <property type="protein sequence ID" value="AAF39631.1"/>
    <property type="molecule type" value="Genomic_DNA"/>
</dbReference>
<dbReference type="PIR" id="G81660">
    <property type="entry name" value="G81660"/>
</dbReference>
<dbReference type="RefSeq" id="WP_010231706.1">
    <property type="nucleotide sequence ID" value="NZ_CP063055.1"/>
</dbReference>
<dbReference type="SMR" id="Q9PJJ8"/>
<dbReference type="GeneID" id="1246199"/>
<dbReference type="KEGG" id="cmu:TC_0831"/>
<dbReference type="eggNOG" id="COG2271">
    <property type="taxonomic scope" value="Bacteria"/>
</dbReference>
<dbReference type="HOGENOM" id="CLU_001265_31_0_0"/>
<dbReference type="OrthoDB" id="9766638at2"/>
<dbReference type="Proteomes" id="UP000000800">
    <property type="component" value="Chromosome"/>
</dbReference>
<dbReference type="GO" id="GO:0005886">
    <property type="term" value="C:plasma membrane"/>
    <property type="evidence" value="ECO:0007669"/>
    <property type="project" value="UniProtKB-SubCell"/>
</dbReference>
<dbReference type="GO" id="GO:0061513">
    <property type="term" value="F:glucose 6-phosphate:phosphate antiporter activity"/>
    <property type="evidence" value="ECO:0007669"/>
    <property type="project" value="TreeGrafter"/>
</dbReference>
<dbReference type="GO" id="GO:0035435">
    <property type="term" value="P:phosphate ion transmembrane transport"/>
    <property type="evidence" value="ECO:0007669"/>
    <property type="project" value="TreeGrafter"/>
</dbReference>
<dbReference type="Gene3D" id="1.20.1250.20">
    <property type="entry name" value="MFS general substrate transporter like domains"/>
    <property type="match status" value="2"/>
</dbReference>
<dbReference type="InterPro" id="IPR011701">
    <property type="entry name" value="MFS"/>
</dbReference>
<dbReference type="InterPro" id="IPR020846">
    <property type="entry name" value="MFS_dom"/>
</dbReference>
<dbReference type="InterPro" id="IPR036259">
    <property type="entry name" value="MFS_trans_sf"/>
</dbReference>
<dbReference type="InterPro" id="IPR051337">
    <property type="entry name" value="OPA_Antiporter"/>
</dbReference>
<dbReference type="InterPro" id="IPR021159">
    <property type="entry name" value="Sugar-P_transporter_CS"/>
</dbReference>
<dbReference type="InterPro" id="IPR000849">
    <property type="entry name" value="Sugar_P_transporter"/>
</dbReference>
<dbReference type="NCBIfam" id="TIGR00881">
    <property type="entry name" value="2A0104"/>
    <property type="match status" value="1"/>
</dbReference>
<dbReference type="PANTHER" id="PTHR43826">
    <property type="entry name" value="GLUCOSE-6-PHOSPHATE EXCHANGER SLC37A4"/>
    <property type="match status" value="1"/>
</dbReference>
<dbReference type="PANTHER" id="PTHR43826:SF3">
    <property type="entry name" value="GLUCOSE-6-PHOSPHATE EXCHANGER SLC37A4"/>
    <property type="match status" value="1"/>
</dbReference>
<dbReference type="Pfam" id="PF07690">
    <property type="entry name" value="MFS_1"/>
    <property type="match status" value="1"/>
</dbReference>
<dbReference type="PIRSF" id="PIRSF002808">
    <property type="entry name" value="Hexose_phosphate_transp"/>
    <property type="match status" value="1"/>
</dbReference>
<dbReference type="SUPFAM" id="SSF103473">
    <property type="entry name" value="MFS general substrate transporter"/>
    <property type="match status" value="1"/>
</dbReference>
<dbReference type="PROSITE" id="PS00942">
    <property type="entry name" value="GLPT"/>
    <property type="match status" value="1"/>
</dbReference>
<dbReference type="PROSITE" id="PS50850">
    <property type="entry name" value="MFS"/>
    <property type="match status" value="1"/>
</dbReference>
<proteinExistence type="inferred from homology"/>
<keyword id="KW-1003">Cell membrane</keyword>
<keyword id="KW-0472">Membrane</keyword>
<keyword id="KW-0762">Sugar transport</keyword>
<keyword id="KW-0812">Transmembrane</keyword>
<keyword id="KW-1133">Transmembrane helix</keyword>
<keyword id="KW-0813">Transport</keyword>
<gene>
    <name type="ordered locus">TC_0831</name>
</gene>
<organism>
    <name type="scientific">Chlamydia muridarum (strain MoPn / Nigg)</name>
    <dbReference type="NCBI Taxonomy" id="243161"/>
    <lineage>
        <taxon>Bacteria</taxon>
        <taxon>Pseudomonadati</taxon>
        <taxon>Chlamydiota</taxon>
        <taxon>Chlamydiia</taxon>
        <taxon>Chlamydiales</taxon>
        <taxon>Chlamydiaceae</taxon>
        <taxon>Chlamydia/Chlamydophila group</taxon>
        <taxon>Chlamydia</taxon>
    </lineage>
</organism>
<name>UHPT_CHLMU</name>
<reference key="1">
    <citation type="journal article" date="2000" name="Nucleic Acids Res.">
        <title>Genome sequences of Chlamydia trachomatis MoPn and Chlamydia pneumoniae AR39.</title>
        <authorList>
            <person name="Read T.D."/>
            <person name="Brunham R.C."/>
            <person name="Shen C."/>
            <person name="Gill S.R."/>
            <person name="Heidelberg J.F."/>
            <person name="White O."/>
            <person name="Hickey E.K."/>
            <person name="Peterson J.D."/>
            <person name="Utterback T.R."/>
            <person name="Berry K.J."/>
            <person name="Bass S."/>
            <person name="Linher K.D."/>
            <person name="Weidman J.F."/>
            <person name="Khouri H.M."/>
            <person name="Craven B."/>
            <person name="Bowman C."/>
            <person name="Dodson R.J."/>
            <person name="Gwinn M.L."/>
            <person name="Nelson W.C."/>
            <person name="DeBoy R.T."/>
            <person name="Kolonay J.F."/>
            <person name="McClarty G."/>
            <person name="Salzberg S.L."/>
            <person name="Eisen J.A."/>
            <person name="Fraser C.M."/>
        </authorList>
    </citation>
    <scope>NUCLEOTIDE SEQUENCE [LARGE SCALE GENOMIC DNA]</scope>
    <source>
        <strain>MoPn / Nigg</strain>
    </source>
</reference>
<evidence type="ECO:0000250" key="1"/>
<evidence type="ECO:0000255" key="2"/>
<evidence type="ECO:0000305" key="3"/>
<accession>Q9PJJ8</accession>
<comment type="function">
    <text evidence="1">Transport protein for sugar phosphate uptake.</text>
</comment>
<comment type="subcellular location">
    <subcellularLocation>
        <location evidence="3">Cell membrane</location>
        <topology evidence="3">Multi-pass membrane protein</topology>
    </subcellularLocation>
</comment>
<comment type="similarity">
    <text evidence="3">Belongs to the major facilitator superfamily. Organophosphate:Pi antiporter (OPA) (TC 2.A.1.4) family.</text>
</comment>
<sequence length="456" mass="51651">MNLWTKIFQPPRHIKEISDPELVKKQYKYWRVRIFYSMFFGYVFFYFTRKSFTFAMPTLIADLGFDKAQLGIIGSTLYITYGISKFVSGVMSDQSNPRYFMATGLIITGLSNIFFGLSSTVPLFVLFWGINGWFQGWGWPPCARLLTHWYSKSERGTWWSVWSTSHNIGGALIPVLTGIAIDYAGWRGAMFIPGIICIIMGFILIDRLRDTPQSLGLPAIEKFKKEDLSHPHEETTADILEEEAERELSTKEILFTYVLSNKWLWFLSFASFFIYVVRMAVNDWSALYLIETKNYSTVKANLCVSLFEIGGLFGMLLAGWLSDTISKGKRGPMNVVFSLGLLFSILGLWGTHDRSIWWADGAFLFIIGFFLFGPQMMIGLAAAELSHKKAAGTASGFTGWFAYFGAAFAGYPLGKVAQDWGWHGFFVALLACALIALLFFLPTWNASEQSLRKHSH</sequence>